<sequence>MNGVNEIRAAFLDFFRKNGHEIVPSSPLVPRNDPTLMFTNAGMVQFKNLFTGVEKRPYTRASTAQKCVRAGGKHNDLDNVGYTARHHTFFEMLGNFSFGDYFKPLAIELAWKLITEVFDLPKDRLLVTVYHDDDEAYDLWKKIAGFPDSKIIRIATSDNFWAMGDTGPCGPCSEIFYDQGEKLFGGPPGSADEDGDRFLEFWNLVFMQFEQRGPGDRIALPKPSIDTGMGLERIAALLQGVTSNYDIDLMRALILAVAQATGVDPDGPMRASHRVIADHLRASSFLIADGVLPSNEGRGYVLRRIMRRAMRHAQLLGAQEPLLWRLVPALTREMGQAYPELLRAEALIVETLRLEETRFRATLARGLTILEDETRHLSEGGVLSGEVAFKLYDTYGFPLDLTQDALRAKSLGVDMEGFEKAMARQRAEARKAWSGSGEAATDTHWFALREQLGATDFLGYDTEKAEALIQAILQDGKEVLRLEAGQSGAIVLNQTPFYGESGGQVGDTGLIIAPGMRFKVENTHKKLGDLFIHEGIVEEGAVVPGLEVRTLVDHSRRTAVRANHSATHLLHEALRQVLGDHIAQKGSLVAPDRLRFDFSHPKPVTPEEWTQIEDIANSVILENAPVTTKLMSIEDAMGSGARALFGEKYGDEVRVVSMGYDEDKADDSTDGRIAPPFSVELCGGTHVARTGDIGLLTIISESAVAAGVRRIEAKTGSSARHHLNTQASLLHSLAAQLKSPEDEASKRLSALIEERRKLDRELSEARKKLAMGGGSSNGADSPLREIGGIKFFRRAVTGVEMKDLKSLADEAKQTIGSGIVAIVGVGSDNKASVVVGVTDDLIDRFDAVALVRLAAGKLGGKGGGGRKDLAQAGGPDGEAAEAALTAIEESLGSSLPTP</sequence>
<comment type="function">
    <text evidence="1">Catalyzes the attachment of alanine to tRNA(Ala) in a two-step reaction: alanine is first activated by ATP to form Ala-AMP and then transferred to the acceptor end of tRNA(Ala). Also edits incorrectly charged Ser-tRNA(Ala) and Gly-tRNA(Ala) via its editing domain.</text>
</comment>
<comment type="catalytic activity">
    <reaction evidence="1">
        <text>tRNA(Ala) + L-alanine + ATP = L-alanyl-tRNA(Ala) + AMP + diphosphate</text>
        <dbReference type="Rhea" id="RHEA:12540"/>
        <dbReference type="Rhea" id="RHEA-COMP:9657"/>
        <dbReference type="Rhea" id="RHEA-COMP:9923"/>
        <dbReference type="ChEBI" id="CHEBI:30616"/>
        <dbReference type="ChEBI" id="CHEBI:33019"/>
        <dbReference type="ChEBI" id="CHEBI:57972"/>
        <dbReference type="ChEBI" id="CHEBI:78442"/>
        <dbReference type="ChEBI" id="CHEBI:78497"/>
        <dbReference type="ChEBI" id="CHEBI:456215"/>
        <dbReference type="EC" id="6.1.1.7"/>
    </reaction>
</comment>
<comment type="cofactor">
    <cofactor evidence="1">
        <name>Zn(2+)</name>
        <dbReference type="ChEBI" id="CHEBI:29105"/>
    </cofactor>
    <text evidence="1">Binds 1 zinc ion per subunit.</text>
</comment>
<comment type="subcellular location">
    <subcellularLocation>
        <location evidence="1">Cytoplasm</location>
    </subcellularLocation>
</comment>
<comment type="domain">
    <text evidence="1">Consists of three domains; the N-terminal catalytic domain, the editing domain and the C-terminal C-Ala domain. The editing domain removes incorrectly charged amino acids, while the C-Ala domain, along with tRNA(Ala), serves as a bridge to cooperatively bring together the editing and aminoacylation centers thus stimulating deacylation of misacylated tRNAs.</text>
</comment>
<comment type="similarity">
    <text evidence="1">Belongs to the class-II aminoacyl-tRNA synthetase family.</text>
</comment>
<comment type="sequence caution" evidence="2">
    <conflict type="erroneous initiation">
        <sequence resource="EMBL-CDS" id="ACB96016"/>
    </conflict>
</comment>
<gene>
    <name evidence="1" type="primary">alaS</name>
    <name type="ordered locus">Bind_2405</name>
</gene>
<protein>
    <recommendedName>
        <fullName evidence="1">Alanine--tRNA ligase</fullName>
        <ecNumber evidence="1">6.1.1.7</ecNumber>
    </recommendedName>
    <alternativeName>
        <fullName evidence="1">Alanyl-tRNA synthetase</fullName>
        <shortName evidence="1">AlaRS</shortName>
    </alternativeName>
</protein>
<keyword id="KW-0030">Aminoacyl-tRNA synthetase</keyword>
<keyword id="KW-0067">ATP-binding</keyword>
<keyword id="KW-0963">Cytoplasm</keyword>
<keyword id="KW-0436">Ligase</keyword>
<keyword id="KW-0479">Metal-binding</keyword>
<keyword id="KW-0547">Nucleotide-binding</keyword>
<keyword id="KW-0648">Protein biosynthesis</keyword>
<keyword id="KW-1185">Reference proteome</keyword>
<keyword id="KW-0694">RNA-binding</keyword>
<keyword id="KW-0820">tRNA-binding</keyword>
<keyword id="KW-0862">Zinc</keyword>
<name>SYA_BEII9</name>
<dbReference type="EC" id="6.1.1.7" evidence="1"/>
<dbReference type="EMBL" id="CP001016">
    <property type="protein sequence ID" value="ACB96016.1"/>
    <property type="status" value="ALT_INIT"/>
    <property type="molecule type" value="Genomic_DNA"/>
</dbReference>
<dbReference type="RefSeq" id="WP_041778073.1">
    <property type="nucleotide sequence ID" value="NC_010581.1"/>
</dbReference>
<dbReference type="SMR" id="B2IHX3"/>
<dbReference type="STRING" id="395963.Bind_2405"/>
<dbReference type="KEGG" id="bid:Bind_2405"/>
<dbReference type="eggNOG" id="COG0013">
    <property type="taxonomic scope" value="Bacteria"/>
</dbReference>
<dbReference type="HOGENOM" id="CLU_004485_1_1_5"/>
<dbReference type="OrthoDB" id="9803884at2"/>
<dbReference type="Proteomes" id="UP000001695">
    <property type="component" value="Chromosome"/>
</dbReference>
<dbReference type="GO" id="GO:0005829">
    <property type="term" value="C:cytosol"/>
    <property type="evidence" value="ECO:0007669"/>
    <property type="project" value="TreeGrafter"/>
</dbReference>
<dbReference type="GO" id="GO:0004813">
    <property type="term" value="F:alanine-tRNA ligase activity"/>
    <property type="evidence" value="ECO:0007669"/>
    <property type="project" value="UniProtKB-UniRule"/>
</dbReference>
<dbReference type="GO" id="GO:0002161">
    <property type="term" value="F:aminoacyl-tRNA deacylase activity"/>
    <property type="evidence" value="ECO:0007669"/>
    <property type="project" value="TreeGrafter"/>
</dbReference>
<dbReference type="GO" id="GO:0005524">
    <property type="term" value="F:ATP binding"/>
    <property type="evidence" value="ECO:0007669"/>
    <property type="project" value="UniProtKB-UniRule"/>
</dbReference>
<dbReference type="GO" id="GO:0000049">
    <property type="term" value="F:tRNA binding"/>
    <property type="evidence" value="ECO:0007669"/>
    <property type="project" value="UniProtKB-KW"/>
</dbReference>
<dbReference type="GO" id="GO:0008270">
    <property type="term" value="F:zinc ion binding"/>
    <property type="evidence" value="ECO:0007669"/>
    <property type="project" value="UniProtKB-UniRule"/>
</dbReference>
<dbReference type="GO" id="GO:0006419">
    <property type="term" value="P:alanyl-tRNA aminoacylation"/>
    <property type="evidence" value="ECO:0007669"/>
    <property type="project" value="UniProtKB-UniRule"/>
</dbReference>
<dbReference type="GO" id="GO:0045892">
    <property type="term" value="P:negative regulation of DNA-templated transcription"/>
    <property type="evidence" value="ECO:0007669"/>
    <property type="project" value="TreeGrafter"/>
</dbReference>
<dbReference type="CDD" id="cd00673">
    <property type="entry name" value="AlaRS_core"/>
    <property type="match status" value="1"/>
</dbReference>
<dbReference type="FunFam" id="2.40.30.130:FF:000001">
    <property type="entry name" value="Alanine--tRNA ligase"/>
    <property type="match status" value="1"/>
</dbReference>
<dbReference type="FunFam" id="3.10.310.40:FF:000001">
    <property type="entry name" value="Alanine--tRNA ligase"/>
    <property type="match status" value="1"/>
</dbReference>
<dbReference type="FunFam" id="3.30.54.20:FF:000001">
    <property type="entry name" value="Alanine--tRNA ligase"/>
    <property type="match status" value="1"/>
</dbReference>
<dbReference type="FunFam" id="3.30.930.10:FF:000004">
    <property type="entry name" value="Alanine--tRNA ligase"/>
    <property type="match status" value="1"/>
</dbReference>
<dbReference type="FunFam" id="3.30.980.10:FF:000004">
    <property type="entry name" value="Alanine--tRNA ligase, cytoplasmic"/>
    <property type="match status" value="1"/>
</dbReference>
<dbReference type="Gene3D" id="2.40.30.130">
    <property type="match status" value="1"/>
</dbReference>
<dbReference type="Gene3D" id="3.10.310.40">
    <property type="match status" value="1"/>
</dbReference>
<dbReference type="Gene3D" id="3.30.54.20">
    <property type="match status" value="1"/>
</dbReference>
<dbReference type="Gene3D" id="6.10.250.550">
    <property type="match status" value="1"/>
</dbReference>
<dbReference type="Gene3D" id="3.30.930.10">
    <property type="entry name" value="Bira Bifunctional Protein, Domain 2"/>
    <property type="match status" value="1"/>
</dbReference>
<dbReference type="Gene3D" id="3.30.980.10">
    <property type="entry name" value="Threonyl-trna Synthetase, Chain A, domain 2"/>
    <property type="match status" value="1"/>
</dbReference>
<dbReference type="HAMAP" id="MF_00036_B">
    <property type="entry name" value="Ala_tRNA_synth_B"/>
    <property type="match status" value="1"/>
</dbReference>
<dbReference type="InterPro" id="IPR045864">
    <property type="entry name" value="aa-tRNA-synth_II/BPL/LPL"/>
</dbReference>
<dbReference type="InterPro" id="IPR002318">
    <property type="entry name" value="Ala-tRNA-lgiase_IIc"/>
</dbReference>
<dbReference type="InterPro" id="IPR018162">
    <property type="entry name" value="Ala-tRNA-ligase_IIc_anticod-bd"/>
</dbReference>
<dbReference type="InterPro" id="IPR018165">
    <property type="entry name" value="Ala-tRNA-synth_IIc_core"/>
</dbReference>
<dbReference type="InterPro" id="IPR018164">
    <property type="entry name" value="Ala-tRNA-synth_IIc_N"/>
</dbReference>
<dbReference type="InterPro" id="IPR050058">
    <property type="entry name" value="Ala-tRNA_ligase"/>
</dbReference>
<dbReference type="InterPro" id="IPR023033">
    <property type="entry name" value="Ala_tRNA_ligase_euk/bac"/>
</dbReference>
<dbReference type="InterPro" id="IPR003156">
    <property type="entry name" value="DHHA1_dom"/>
</dbReference>
<dbReference type="InterPro" id="IPR018163">
    <property type="entry name" value="Thr/Ala-tRNA-synth_IIc_edit"/>
</dbReference>
<dbReference type="InterPro" id="IPR009000">
    <property type="entry name" value="Transl_B-barrel_sf"/>
</dbReference>
<dbReference type="InterPro" id="IPR012947">
    <property type="entry name" value="tRNA_SAD"/>
</dbReference>
<dbReference type="NCBIfam" id="TIGR00344">
    <property type="entry name" value="alaS"/>
    <property type="match status" value="1"/>
</dbReference>
<dbReference type="PANTHER" id="PTHR11777:SF9">
    <property type="entry name" value="ALANINE--TRNA LIGASE, CYTOPLASMIC"/>
    <property type="match status" value="1"/>
</dbReference>
<dbReference type="PANTHER" id="PTHR11777">
    <property type="entry name" value="ALANYL-TRNA SYNTHETASE"/>
    <property type="match status" value="1"/>
</dbReference>
<dbReference type="Pfam" id="PF02272">
    <property type="entry name" value="DHHA1"/>
    <property type="match status" value="1"/>
</dbReference>
<dbReference type="Pfam" id="PF01411">
    <property type="entry name" value="tRNA-synt_2c"/>
    <property type="match status" value="1"/>
</dbReference>
<dbReference type="Pfam" id="PF07973">
    <property type="entry name" value="tRNA_SAD"/>
    <property type="match status" value="1"/>
</dbReference>
<dbReference type="PRINTS" id="PR00980">
    <property type="entry name" value="TRNASYNTHALA"/>
</dbReference>
<dbReference type="SMART" id="SM00863">
    <property type="entry name" value="tRNA_SAD"/>
    <property type="match status" value="1"/>
</dbReference>
<dbReference type="SUPFAM" id="SSF55681">
    <property type="entry name" value="Class II aaRS and biotin synthetases"/>
    <property type="match status" value="1"/>
</dbReference>
<dbReference type="SUPFAM" id="SSF101353">
    <property type="entry name" value="Putative anticodon-binding domain of alanyl-tRNA synthetase (AlaRS)"/>
    <property type="match status" value="1"/>
</dbReference>
<dbReference type="SUPFAM" id="SSF55186">
    <property type="entry name" value="ThrRS/AlaRS common domain"/>
    <property type="match status" value="1"/>
</dbReference>
<dbReference type="SUPFAM" id="SSF50447">
    <property type="entry name" value="Translation proteins"/>
    <property type="match status" value="1"/>
</dbReference>
<dbReference type="PROSITE" id="PS50860">
    <property type="entry name" value="AA_TRNA_LIGASE_II_ALA"/>
    <property type="match status" value="1"/>
</dbReference>
<proteinExistence type="inferred from homology"/>
<feature type="chain" id="PRO_0000347506" description="Alanine--tRNA ligase">
    <location>
        <begin position="1"/>
        <end position="898"/>
    </location>
</feature>
<feature type="binding site" evidence="1">
    <location>
        <position position="564"/>
    </location>
    <ligand>
        <name>Zn(2+)</name>
        <dbReference type="ChEBI" id="CHEBI:29105"/>
    </ligand>
</feature>
<feature type="binding site" evidence="1">
    <location>
        <position position="568"/>
    </location>
    <ligand>
        <name>Zn(2+)</name>
        <dbReference type="ChEBI" id="CHEBI:29105"/>
    </ligand>
</feature>
<feature type="binding site" evidence="1">
    <location>
        <position position="682"/>
    </location>
    <ligand>
        <name>Zn(2+)</name>
        <dbReference type="ChEBI" id="CHEBI:29105"/>
    </ligand>
</feature>
<feature type="binding site" evidence="1">
    <location>
        <position position="686"/>
    </location>
    <ligand>
        <name>Zn(2+)</name>
        <dbReference type="ChEBI" id="CHEBI:29105"/>
    </ligand>
</feature>
<accession>B2IHX3</accession>
<evidence type="ECO:0000255" key="1">
    <source>
        <dbReference type="HAMAP-Rule" id="MF_00036"/>
    </source>
</evidence>
<evidence type="ECO:0000305" key="2"/>
<organism>
    <name type="scientific">Beijerinckia indica subsp. indica (strain ATCC 9039 / DSM 1715 / NCIMB 8712)</name>
    <dbReference type="NCBI Taxonomy" id="395963"/>
    <lineage>
        <taxon>Bacteria</taxon>
        <taxon>Pseudomonadati</taxon>
        <taxon>Pseudomonadota</taxon>
        <taxon>Alphaproteobacteria</taxon>
        <taxon>Hyphomicrobiales</taxon>
        <taxon>Beijerinckiaceae</taxon>
        <taxon>Beijerinckia</taxon>
    </lineage>
</organism>
<reference key="1">
    <citation type="journal article" date="2010" name="J. Bacteriol.">
        <title>Complete genome sequence of Beijerinckia indica subsp. indica.</title>
        <authorList>
            <person name="Tamas I."/>
            <person name="Dedysh S.N."/>
            <person name="Liesack W."/>
            <person name="Stott M.B."/>
            <person name="Alam M."/>
            <person name="Murrell J.C."/>
            <person name="Dunfield P.F."/>
        </authorList>
    </citation>
    <scope>NUCLEOTIDE SEQUENCE [LARGE SCALE GENOMIC DNA]</scope>
    <source>
        <strain>ATCC 9039 / DSM 1715 / NCIMB 8712</strain>
    </source>
</reference>